<protein>
    <recommendedName>
        <fullName>Polycomb group protein FIE2</fullName>
    </recommendedName>
    <alternativeName>
        <fullName>Protein FERTILIZATION-INDEPENDENT ENDOSPERM 2</fullName>
    </alternativeName>
</protein>
<accession>Q8VZY6</accession>
<sequence>MAKLGPGQGLGCEAAEGSLVPSRKREYKPCGKHTEGKRPLYAIGFNFMDARYYDVFATVGGNRVTTYRCLENGSFALLQAYVDEDKDESFYTLSWARDHVDGSPLLVAAGSNGIIRVINCATEKLAKSFVGHGDSINEIRTQPLKPSLIISASKDESVRLWNVHTGICILIFAGAGGHRNEVLSVDFHPSDIERFASCGMDNTVKIWSMKEFWLYVDKSYSWTDLPSKFPTKYVQFPVLIAAVHSNYVDCTRWLGDFILSKSVDNEIVLWEPKTKEQSPGEGSIDILQKYPVPECDIWFIKFSCDFHFNQLAIGNREGKIYVWEVQSSPPVLIARLYNQQCKSPIRQTAVSFDGSTILGAGEDGTIWRWDEVDHPSSRN</sequence>
<proteinExistence type="evidence at transcript level"/>
<feature type="chain" id="PRO_0000050979" description="Polycomb group protein FIE2">
    <location>
        <begin position="1"/>
        <end position="379"/>
    </location>
</feature>
<feature type="repeat" description="WD 1">
    <location>
        <begin position="85"/>
        <end position="128"/>
    </location>
</feature>
<feature type="repeat" description="WD 2">
    <location>
        <begin position="131"/>
        <end position="171"/>
    </location>
</feature>
<feature type="repeat" description="WD 3">
    <location>
        <begin position="177"/>
        <end position="217"/>
    </location>
</feature>
<feature type="repeat" description="WD 4">
    <location>
        <begin position="243"/>
        <end position="280"/>
    </location>
</feature>
<feature type="repeat" description="WD 5">
    <location>
        <begin position="292"/>
        <end position="333"/>
    </location>
</feature>
<feature type="repeat" description="WD 6">
    <location>
        <begin position="340"/>
        <end position="378"/>
    </location>
</feature>
<dbReference type="EMBL" id="AY061965">
    <property type="protein sequence ID" value="AAL35974.1"/>
    <property type="molecule type" value="mRNA"/>
</dbReference>
<dbReference type="EMBL" id="AY150644">
    <property type="protein sequence ID" value="AAO26658.1"/>
    <property type="molecule type" value="mRNA"/>
</dbReference>
<dbReference type="RefSeq" id="NP_001105182.1">
    <property type="nucleotide sequence ID" value="NM_001111712.1"/>
</dbReference>
<dbReference type="SMR" id="Q8VZY6"/>
<dbReference type="FunCoup" id="Q8VZY6">
    <property type="interactions" value="2361"/>
</dbReference>
<dbReference type="STRING" id="4577.Q8VZY6"/>
<dbReference type="PaxDb" id="4577-GRMZM2G148924_P05"/>
<dbReference type="EnsemblPlants" id="Zm00001eb416950_T001">
    <property type="protein sequence ID" value="Zm00001eb416950_P001"/>
    <property type="gene ID" value="Zm00001eb416950"/>
</dbReference>
<dbReference type="GeneID" id="542076"/>
<dbReference type="Gramene" id="Zm00001eb416950_T001">
    <property type="protein sequence ID" value="Zm00001eb416950_P001"/>
    <property type="gene ID" value="Zm00001eb416950"/>
</dbReference>
<dbReference type="KEGG" id="zma:542076"/>
<dbReference type="MaizeGDB" id="754920"/>
<dbReference type="eggNOG" id="KOG1034">
    <property type="taxonomic scope" value="Eukaryota"/>
</dbReference>
<dbReference type="HOGENOM" id="CLU_032683_2_0_1"/>
<dbReference type="InParanoid" id="Q8VZY6"/>
<dbReference type="OMA" id="RDVHRNY"/>
<dbReference type="OrthoDB" id="7318948at2759"/>
<dbReference type="Proteomes" id="UP000007305">
    <property type="component" value="Chromosome 10"/>
</dbReference>
<dbReference type="ExpressionAtlas" id="Q8VZY6">
    <property type="expression patterns" value="baseline and differential"/>
</dbReference>
<dbReference type="GO" id="GO:0035098">
    <property type="term" value="C:ESC/E(Z) complex"/>
    <property type="evidence" value="ECO:0000318"/>
    <property type="project" value="GO_Central"/>
</dbReference>
<dbReference type="GO" id="GO:0031507">
    <property type="term" value="P:heterochromatin formation"/>
    <property type="evidence" value="ECO:0000318"/>
    <property type="project" value="GO_Central"/>
</dbReference>
<dbReference type="GO" id="GO:0000122">
    <property type="term" value="P:negative regulation of transcription by RNA polymerase II"/>
    <property type="evidence" value="ECO:0000318"/>
    <property type="project" value="GO_Central"/>
</dbReference>
<dbReference type="FunFam" id="2.130.10.10:FF:000268">
    <property type="entry name" value="polycomb group protein FIE1"/>
    <property type="match status" value="1"/>
</dbReference>
<dbReference type="Gene3D" id="2.130.10.10">
    <property type="entry name" value="YVTN repeat-like/Quinoprotein amine dehydrogenase"/>
    <property type="match status" value="1"/>
</dbReference>
<dbReference type="InterPro" id="IPR020472">
    <property type="entry name" value="G-protein_beta_WD-40_rep"/>
</dbReference>
<dbReference type="InterPro" id="IPR051243">
    <property type="entry name" value="PcG_WD-repeat"/>
</dbReference>
<dbReference type="InterPro" id="IPR015943">
    <property type="entry name" value="WD40/YVTN_repeat-like_dom_sf"/>
</dbReference>
<dbReference type="InterPro" id="IPR019775">
    <property type="entry name" value="WD40_repeat_CS"/>
</dbReference>
<dbReference type="InterPro" id="IPR036322">
    <property type="entry name" value="WD40_repeat_dom_sf"/>
</dbReference>
<dbReference type="InterPro" id="IPR001680">
    <property type="entry name" value="WD40_rpt"/>
</dbReference>
<dbReference type="PANTHER" id="PTHR10253">
    <property type="entry name" value="POLYCOMB PROTEIN"/>
    <property type="match status" value="1"/>
</dbReference>
<dbReference type="Pfam" id="PF00400">
    <property type="entry name" value="WD40"/>
    <property type="match status" value="3"/>
</dbReference>
<dbReference type="PRINTS" id="PR00320">
    <property type="entry name" value="GPROTEINBRPT"/>
</dbReference>
<dbReference type="SMART" id="SM00320">
    <property type="entry name" value="WD40"/>
    <property type="match status" value="6"/>
</dbReference>
<dbReference type="SUPFAM" id="SSF50978">
    <property type="entry name" value="WD40 repeat-like"/>
    <property type="match status" value="1"/>
</dbReference>
<dbReference type="PROSITE" id="PS00678">
    <property type="entry name" value="WD_REPEATS_1"/>
    <property type="match status" value="1"/>
</dbReference>
<dbReference type="PROSITE" id="PS50082">
    <property type="entry name" value="WD_REPEATS_2"/>
    <property type="match status" value="2"/>
</dbReference>
<dbReference type="PROSITE" id="PS50294">
    <property type="entry name" value="WD_REPEATS_REGION"/>
    <property type="match status" value="1"/>
</dbReference>
<name>FIE2_MAIZE</name>
<organism>
    <name type="scientific">Zea mays</name>
    <name type="common">Maize</name>
    <dbReference type="NCBI Taxonomy" id="4577"/>
    <lineage>
        <taxon>Eukaryota</taxon>
        <taxon>Viridiplantae</taxon>
        <taxon>Streptophyta</taxon>
        <taxon>Embryophyta</taxon>
        <taxon>Tracheophyta</taxon>
        <taxon>Spermatophyta</taxon>
        <taxon>Magnoliopsida</taxon>
        <taxon>Liliopsida</taxon>
        <taxon>Poales</taxon>
        <taxon>Poaceae</taxon>
        <taxon>PACMAD clade</taxon>
        <taxon>Panicoideae</taxon>
        <taxon>Andropogonodae</taxon>
        <taxon>Andropogoneae</taxon>
        <taxon>Tripsacinae</taxon>
        <taxon>Zea</taxon>
    </lineage>
</organism>
<comment type="function">
    <text evidence="1">Polycomb group (PcG) protein. PcG proteins act by forming multiprotein complexes, which are required to maintain the transcriptionally repressive state of homeotic genes throughout development. PcG proteins are not required to initiate repression, but to maintain it during later stages of development. They probably act via the methylation of histones, rendering chromatin heritably changed in its expressibility (By similarity).</text>
</comment>
<comment type="subcellular location">
    <subcellularLocation>
        <location evidence="4">Nucleus</location>
    </subcellularLocation>
</comment>
<comment type="tissue specificity">
    <text evidence="2 3">Widely expressed. Expressed in the embryo sac before pollination. After pollination, its expression persists, predominantly in the embryo and at lower levels in the endosperm.</text>
</comment>
<comment type="similarity">
    <text evidence="4">Belongs to the WD repeat ESC family.</text>
</comment>
<reference key="1">
    <citation type="journal article" date="2002" name="Plant Physiol.">
        <title>Sequence relationships, conserved domains, and expression patterns for maize homologs of the Polycomb group genes E(z), esc, and E(Pc).</title>
        <authorList>
            <person name="Springer N.M."/>
            <person name="Danilevskaya O.N."/>
            <person name="Hermon P."/>
            <person name="Helentjaris T.G."/>
            <person name="Phillips R.L."/>
            <person name="Kaeppler H.F."/>
            <person name="Kaeppler S.M."/>
        </authorList>
    </citation>
    <scope>NUCLEOTIDE SEQUENCE [MRNA]</scope>
    <scope>TISSUE SPECIFICITY</scope>
    <source>
        <tissue>Seed</tissue>
    </source>
</reference>
<reference key="2">
    <citation type="journal article" date="2003" name="Plant Cell">
        <title>Duplicated fie genes in maize: expression pattern and imprinting suggest distinct functions.</title>
        <authorList>
            <person name="Danilevskaya O.N."/>
            <person name="Hermon P."/>
            <person name="Hantke S."/>
            <person name="Muszynski M.G."/>
            <person name="Kollipara K."/>
            <person name="Ananiev E.V."/>
        </authorList>
    </citation>
    <scope>NUCLEOTIDE SEQUENCE [MRNA]</scope>
    <scope>TISSUE SPECIFICITY</scope>
</reference>
<gene>
    <name type="primary">FIE2</name>
</gene>
<keyword id="KW-0156">Chromatin regulator</keyword>
<keyword id="KW-0539">Nucleus</keyword>
<keyword id="KW-1185">Reference proteome</keyword>
<keyword id="KW-0677">Repeat</keyword>
<keyword id="KW-0678">Repressor</keyword>
<keyword id="KW-0804">Transcription</keyword>
<keyword id="KW-0805">Transcription regulation</keyword>
<keyword id="KW-0853">WD repeat</keyword>
<evidence type="ECO:0000250" key="1"/>
<evidence type="ECO:0000269" key="2">
    <source>
    </source>
</evidence>
<evidence type="ECO:0000269" key="3">
    <source>
    </source>
</evidence>
<evidence type="ECO:0000305" key="4"/>